<evidence type="ECO:0000250" key="1"/>
<evidence type="ECO:0000255" key="2">
    <source>
        <dbReference type="PROSITE-ProRule" id="PRU00111"/>
    </source>
</evidence>
<proteinExistence type="inferred from homology"/>
<protein>
    <recommendedName>
        <fullName>Ribose operon repressor</fullName>
    </recommendedName>
</protein>
<reference key="1">
    <citation type="journal article" date="2001" name="Genome Res.">
        <title>The complete genome sequence of the lactic acid bacterium Lactococcus lactis ssp. lactis IL1403.</title>
        <authorList>
            <person name="Bolotin A."/>
            <person name="Wincker P."/>
            <person name="Mauger S."/>
            <person name="Jaillon O."/>
            <person name="Malarme K."/>
            <person name="Weissenbach J."/>
            <person name="Ehrlich S.D."/>
            <person name="Sorokin A."/>
        </authorList>
    </citation>
    <scope>NUCLEOTIDE SEQUENCE [LARGE SCALE GENOMIC DNA]</scope>
    <source>
        <strain>IL1403</strain>
    </source>
</reference>
<organism>
    <name type="scientific">Lactococcus lactis subsp. lactis (strain IL1403)</name>
    <name type="common">Streptococcus lactis</name>
    <dbReference type="NCBI Taxonomy" id="272623"/>
    <lineage>
        <taxon>Bacteria</taxon>
        <taxon>Bacillati</taxon>
        <taxon>Bacillota</taxon>
        <taxon>Bacilli</taxon>
        <taxon>Lactobacillales</taxon>
        <taxon>Streptococcaceae</taxon>
        <taxon>Lactococcus</taxon>
    </lineage>
</organism>
<accession>Q9CF41</accession>
<sequence>MTTIKQVALEAGVSKSTVSRFIAQNGYVSDEAREKIERAIKKLNFRPNLSAQSLKTKKNQLVGLLLPDISNPFFPMLAKGAEEFLKEKGYRVMLGNIGEKNQSEQDYLKVLIQSNAAGIISTHDFKEDFPDLDIPTVIVDRVGHKSNYGVFSDNESGGRLAAKVIVTAGAKKVAVVSGPLNATNINNRFKSSIAYLKEKQVDFKAFYSQSYDFEEIQKEAREVLANEENFDSIIAPSDIHAMAYIHEIHRLNKKIPEDIQIIGYDDIQMSQFIYPALSTIHQSAYQMGLEAAQLIYKIATDQAIEKSKIELPVHYVARETIRQKRKE</sequence>
<gene>
    <name type="primary">rbsR</name>
    <name type="ordered locus">LL1640</name>
    <name type="ORF">L0145</name>
</gene>
<name>RBSR_LACLA</name>
<dbReference type="EMBL" id="AE005176">
    <property type="protein sequence ID" value="AAK05738.1"/>
    <property type="molecule type" value="Genomic_DNA"/>
</dbReference>
<dbReference type="PIR" id="H86829">
    <property type="entry name" value="H86829"/>
</dbReference>
<dbReference type="RefSeq" id="NP_267796.1">
    <property type="nucleotide sequence ID" value="NC_002662.1"/>
</dbReference>
<dbReference type="RefSeq" id="WP_010906073.1">
    <property type="nucleotide sequence ID" value="NC_002662.1"/>
</dbReference>
<dbReference type="SMR" id="Q9CF41"/>
<dbReference type="PaxDb" id="272623-L0145"/>
<dbReference type="EnsemblBacteria" id="AAK05738">
    <property type="protein sequence ID" value="AAK05738"/>
    <property type="gene ID" value="L0145"/>
</dbReference>
<dbReference type="KEGG" id="lla:L0145"/>
<dbReference type="PATRIC" id="fig|272623.7.peg.1762"/>
<dbReference type="eggNOG" id="COG1609">
    <property type="taxonomic scope" value="Bacteria"/>
</dbReference>
<dbReference type="HOGENOM" id="CLU_037628_6_1_9"/>
<dbReference type="OrthoDB" id="9796186at2"/>
<dbReference type="Proteomes" id="UP000002196">
    <property type="component" value="Chromosome"/>
</dbReference>
<dbReference type="GO" id="GO:0003700">
    <property type="term" value="F:DNA-binding transcription factor activity"/>
    <property type="evidence" value="ECO:0007669"/>
    <property type="project" value="TreeGrafter"/>
</dbReference>
<dbReference type="GO" id="GO:0000976">
    <property type="term" value="F:transcription cis-regulatory region binding"/>
    <property type="evidence" value="ECO:0007669"/>
    <property type="project" value="TreeGrafter"/>
</dbReference>
<dbReference type="CDD" id="cd01392">
    <property type="entry name" value="HTH_LacI"/>
    <property type="match status" value="1"/>
</dbReference>
<dbReference type="CDD" id="cd06291">
    <property type="entry name" value="PBP1_Qymf-like"/>
    <property type="match status" value="1"/>
</dbReference>
<dbReference type="Gene3D" id="3.40.50.2300">
    <property type="match status" value="2"/>
</dbReference>
<dbReference type="Gene3D" id="1.10.260.40">
    <property type="entry name" value="lambda repressor-like DNA-binding domains"/>
    <property type="match status" value="1"/>
</dbReference>
<dbReference type="InterPro" id="IPR000843">
    <property type="entry name" value="HTH_LacI"/>
</dbReference>
<dbReference type="InterPro" id="IPR046335">
    <property type="entry name" value="LacI/GalR-like_sensor"/>
</dbReference>
<dbReference type="InterPro" id="IPR010982">
    <property type="entry name" value="Lambda_DNA-bd_dom_sf"/>
</dbReference>
<dbReference type="InterPro" id="IPR028082">
    <property type="entry name" value="Peripla_BP_I"/>
</dbReference>
<dbReference type="PANTHER" id="PTHR30146">
    <property type="entry name" value="LACI-RELATED TRANSCRIPTIONAL REPRESSOR"/>
    <property type="match status" value="1"/>
</dbReference>
<dbReference type="PANTHER" id="PTHR30146:SF95">
    <property type="entry name" value="RIBOSE OPERON REPRESSOR"/>
    <property type="match status" value="1"/>
</dbReference>
<dbReference type="Pfam" id="PF00356">
    <property type="entry name" value="LacI"/>
    <property type="match status" value="1"/>
</dbReference>
<dbReference type="Pfam" id="PF13377">
    <property type="entry name" value="Peripla_BP_3"/>
    <property type="match status" value="1"/>
</dbReference>
<dbReference type="SMART" id="SM00354">
    <property type="entry name" value="HTH_LACI"/>
    <property type="match status" value="1"/>
</dbReference>
<dbReference type="SUPFAM" id="SSF47413">
    <property type="entry name" value="lambda repressor-like DNA-binding domains"/>
    <property type="match status" value="1"/>
</dbReference>
<dbReference type="SUPFAM" id="SSF53822">
    <property type="entry name" value="Periplasmic binding protein-like I"/>
    <property type="match status" value="1"/>
</dbReference>
<dbReference type="PROSITE" id="PS50932">
    <property type="entry name" value="HTH_LACI_2"/>
    <property type="match status" value="1"/>
</dbReference>
<feature type="chain" id="PRO_0000107990" description="Ribose operon repressor">
    <location>
        <begin position="1"/>
        <end position="327"/>
    </location>
</feature>
<feature type="domain" description="HTH lacI-type" evidence="2">
    <location>
        <begin position="1"/>
        <end position="56"/>
    </location>
</feature>
<feature type="DNA-binding region" description="H-T-H motif" evidence="2">
    <location>
        <begin position="4"/>
        <end position="23"/>
    </location>
</feature>
<keyword id="KW-0238">DNA-binding</keyword>
<keyword id="KW-1185">Reference proteome</keyword>
<keyword id="KW-0678">Repressor</keyword>
<keyword id="KW-0804">Transcription</keyword>
<keyword id="KW-0805">Transcription regulation</keyword>
<comment type="function">
    <text evidence="1">Transcriptional repressor for the ribose rbsDACBK operon.</text>
</comment>